<name>RENI_PANTR</name>
<accession>P60016</accession>
<keyword id="KW-0064">Aspartyl protease</keyword>
<keyword id="KW-0165">Cleavage on pair of basic residues</keyword>
<keyword id="KW-1015">Disulfide bond</keyword>
<keyword id="KW-0325">Glycoprotein</keyword>
<keyword id="KW-0378">Hydrolase</keyword>
<keyword id="KW-0472">Membrane</keyword>
<keyword id="KW-0645">Protease</keyword>
<keyword id="KW-1185">Reference proteome</keyword>
<keyword id="KW-0964">Secreted</keyword>
<keyword id="KW-0732">Signal</keyword>
<keyword id="KW-0865">Zymogen</keyword>
<reference key="1">
    <citation type="journal article" date="2000" name="Genomics">
        <title>Human-chimpanzee DNA sequence variation in the four major genes of the renin angiotensin system.</title>
        <authorList>
            <person name="Dufour C."/>
            <person name="Casane D."/>
            <person name="Denton D."/>
            <person name="Wickings J."/>
            <person name="Corvol P."/>
            <person name="Jeunemaitre X."/>
        </authorList>
    </citation>
    <scope>NUCLEOTIDE SEQUENCE [GENOMIC DNA]</scope>
</reference>
<sequence>MDGWRRMPRWGLLLLLWGSCTFGLPTDTTTFKRIFLKRMPSIRESLKERGVDMARLGPEWSQPMKRLTLGNTTSSVILTNYMDTQYYGEIGIGTPPQTFKVVFDTGSSNVWVPSSKCSRLYTACVYHKLFDASDSSSYKHNGTELTLRYSTGTVSGFLSQDIITVGGITVTQMFGEVTEMPALPFMLAEFDGVVGMGFIEQAIGRVTPIFDNIISQGVLKEDVFSFYYNRDSENSQSLGGQIVLGGSDPQHYEGNFHYINLIKTGVWQIQMKGVSVGSSTLLCEDGCLALVDTGASYISGSTSSIEKLMEALGAKKRLFDYVVKCNEGPTLPDISFHLGGKEYTLTSADYVFQESYSSKKLCTLAIHAMDIPPPTGPTWALGATFIRKFYTEFDRRNNRIGFALAR</sequence>
<feature type="signal peptide" evidence="1">
    <location>
        <begin position="1"/>
        <end position="23"/>
    </location>
</feature>
<feature type="propeptide" id="PRO_0000026087" description="Activation peptide" evidence="1">
    <location>
        <begin position="24"/>
        <end position="66"/>
    </location>
</feature>
<feature type="chain" id="PRO_0000026088" description="Renin">
    <location>
        <begin position="67"/>
        <end position="406"/>
    </location>
</feature>
<feature type="domain" description="Peptidase A1" evidence="3">
    <location>
        <begin position="86"/>
        <end position="403"/>
    </location>
</feature>
<feature type="active site" evidence="4">
    <location>
        <position position="104"/>
    </location>
</feature>
<feature type="active site" evidence="4">
    <location>
        <position position="292"/>
    </location>
</feature>
<feature type="glycosylation site" description="N-linked (GlcNAc...) asparagine" evidence="2">
    <location>
        <position position="71"/>
    </location>
</feature>
<feature type="glycosylation site" description="N-linked (GlcNAc...) asparagine" evidence="2">
    <location>
        <position position="141"/>
    </location>
</feature>
<feature type="disulfide bond" evidence="1">
    <location>
        <begin position="117"/>
        <end position="124"/>
    </location>
</feature>
<feature type="disulfide bond" evidence="1">
    <location>
        <begin position="283"/>
        <end position="287"/>
    </location>
</feature>
<feature type="disulfide bond" evidence="1">
    <location>
        <begin position="325"/>
        <end position="362"/>
    </location>
</feature>
<dbReference type="EC" id="3.4.23.15" evidence="1"/>
<dbReference type="EMBL" id="AF193456">
    <property type="protein sequence ID" value="AAG30305.1"/>
    <property type="molecule type" value="Genomic_DNA"/>
</dbReference>
<dbReference type="EMBL" id="AF193447">
    <property type="protein sequence ID" value="AAG30305.1"/>
    <property type="status" value="JOINED"/>
    <property type="molecule type" value="Genomic_DNA"/>
</dbReference>
<dbReference type="EMBL" id="AF193448">
    <property type="protein sequence ID" value="AAG30305.1"/>
    <property type="status" value="JOINED"/>
    <property type="molecule type" value="Genomic_DNA"/>
</dbReference>
<dbReference type="EMBL" id="AF193449">
    <property type="protein sequence ID" value="AAG30305.1"/>
    <property type="status" value="JOINED"/>
    <property type="molecule type" value="Genomic_DNA"/>
</dbReference>
<dbReference type="EMBL" id="AF193450">
    <property type="protein sequence ID" value="AAG30305.1"/>
    <property type="status" value="JOINED"/>
    <property type="molecule type" value="Genomic_DNA"/>
</dbReference>
<dbReference type="EMBL" id="AF193451">
    <property type="protein sequence ID" value="AAG30305.1"/>
    <property type="status" value="JOINED"/>
    <property type="molecule type" value="Genomic_DNA"/>
</dbReference>
<dbReference type="EMBL" id="AF193452">
    <property type="protein sequence ID" value="AAG30305.1"/>
    <property type="status" value="JOINED"/>
    <property type="molecule type" value="Genomic_DNA"/>
</dbReference>
<dbReference type="EMBL" id="AF193453">
    <property type="protein sequence ID" value="AAG30305.1"/>
    <property type="status" value="JOINED"/>
    <property type="molecule type" value="Genomic_DNA"/>
</dbReference>
<dbReference type="EMBL" id="AF193454">
    <property type="protein sequence ID" value="AAG30305.1"/>
    <property type="status" value="JOINED"/>
    <property type="molecule type" value="Genomic_DNA"/>
</dbReference>
<dbReference type="EMBL" id="AF193455">
    <property type="protein sequence ID" value="AAG30305.1"/>
    <property type="status" value="JOINED"/>
    <property type="molecule type" value="Genomic_DNA"/>
</dbReference>
<dbReference type="SMR" id="P60016"/>
<dbReference type="FunCoup" id="P60016">
    <property type="interactions" value="55"/>
</dbReference>
<dbReference type="STRING" id="9598.ENSPTRP00000051292"/>
<dbReference type="MEROPS" id="A01.007"/>
<dbReference type="GlyCosmos" id="P60016">
    <property type="glycosylation" value="2 sites, No reported glycans"/>
</dbReference>
<dbReference type="PaxDb" id="9598-ENSPTRP00000051294"/>
<dbReference type="eggNOG" id="KOG1339">
    <property type="taxonomic scope" value="Eukaryota"/>
</dbReference>
<dbReference type="InParanoid" id="P60016"/>
<dbReference type="Proteomes" id="UP000002277">
    <property type="component" value="Unplaced"/>
</dbReference>
<dbReference type="GO" id="GO:0005615">
    <property type="term" value="C:extracellular space"/>
    <property type="evidence" value="ECO:0000318"/>
    <property type="project" value="GO_Central"/>
</dbReference>
<dbReference type="GO" id="GO:0016020">
    <property type="term" value="C:membrane"/>
    <property type="evidence" value="ECO:0007669"/>
    <property type="project" value="UniProtKB-SubCell"/>
</dbReference>
<dbReference type="GO" id="GO:0004190">
    <property type="term" value="F:aspartic-type endopeptidase activity"/>
    <property type="evidence" value="ECO:0000318"/>
    <property type="project" value="GO_Central"/>
</dbReference>
<dbReference type="GO" id="GO:0002003">
    <property type="term" value="P:angiotensin maturation"/>
    <property type="evidence" value="ECO:0000318"/>
    <property type="project" value="GO_Central"/>
</dbReference>
<dbReference type="CDD" id="cd05487">
    <property type="entry name" value="renin_like"/>
    <property type="match status" value="1"/>
</dbReference>
<dbReference type="FunFam" id="2.40.70.10:FF:000037">
    <property type="entry name" value="Renin"/>
    <property type="match status" value="1"/>
</dbReference>
<dbReference type="FunFam" id="2.40.70.10:FF:000032">
    <property type="entry name" value="renin"/>
    <property type="match status" value="1"/>
</dbReference>
<dbReference type="Gene3D" id="2.40.70.10">
    <property type="entry name" value="Acid Proteases"/>
    <property type="match status" value="2"/>
</dbReference>
<dbReference type="InterPro" id="IPR001461">
    <property type="entry name" value="Aspartic_peptidase_A1"/>
</dbReference>
<dbReference type="InterPro" id="IPR001969">
    <property type="entry name" value="Aspartic_peptidase_AS"/>
</dbReference>
<dbReference type="InterPro" id="IPR012848">
    <property type="entry name" value="Aspartic_peptidase_N"/>
</dbReference>
<dbReference type="InterPro" id="IPR033121">
    <property type="entry name" value="PEPTIDASE_A1"/>
</dbReference>
<dbReference type="InterPro" id="IPR021109">
    <property type="entry name" value="Peptidase_aspartic_dom_sf"/>
</dbReference>
<dbReference type="InterPro" id="IPR034135">
    <property type="entry name" value="Renin-like_dom"/>
</dbReference>
<dbReference type="PANTHER" id="PTHR47966">
    <property type="entry name" value="BETA-SITE APP-CLEAVING ENZYME, ISOFORM A-RELATED"/>
    <property type="match status" value="1"/>
</dbReference>
<dbReference type="PANTHER" id="PTHR47966:SF24">
    <property type="entry name" value="RENIN"/>
    <property type="match status" value="1"/>
</dbReference>
<dbReference type="Pfam" id="PF07966">
    <property type="entry name" value="A1_Propeptide"/>
    <property type="match status" value="1"/>
</dbReference>
<dbReference type="Pfam" id="PF00026">
    <property type="entry name" value="Asp"/>
    <property type="match status" value="1"/>
</dbReference>
<dbReference type="PRINTS" id="PR00792">
    <property type="entry name" value="PEPSIN"/>
</dbReference>
<dbReference type="SUPFAM" id="SSF50630">
    <property type="entry name" value="Acid proteases"/>
    <property type="match status" value="1"/>
</dbReference>
<dbReference type="PROSITE" id="PS00141">
    <property type="entry name" value="ASP_PROTEASE"/>
    <property type="match status" value="2"/>
</dbReference>
<dbReference type="PROSITE" id="PS51767">
    <property type="entry name" value="PEPTIDASE_A1"/>
    <property type="match status" value="1"/>
</dbReference>
<protein>
    <recommendedName>
        <fullName evidence="5">Renin</fullName>
        <ecNumber evidence="1">3.4.23.15</ecNumber>
    </recommendedName>
    <alternativeName>
        <fullName>Angiotensinogenase</fullName>
    </alternativeName>
</protein>
<comment type="function">
    <text evidence="1">Renin is a highly specific endopeptidase, whose only known function is to generate angiotensin I from angiotensinogen in the plasma, initiating a cascade of reactions that produce an elevation of blood pressure and increased sodium retention by the kidney.</text>
</comment>
<comment type="catalytic activity">
    <reaction evidence="1">
        <text>Cleavage of Leu-|-Xaa bond in angiotensinogen to generate angiotensin I.</text>
        <dbReference type="EC" id="3.4.23.15"/>
    </reaction>
</comment>
<comment type="activity regulation">
    <text evidence="1">Interaction with ATP6AP2 results in a 5-fold increased efficiency in angiotensinogen processing.</text>
</comment>
<comment type="subunit">
    <text evidence="1">Interacts with ATP6AP2.</text>
</comment>
<comment type="subcellular location">
    <subcellularLocation>
        <location evidence="1">Secreted</location>
    </subcellularLocation>
    <subcellularLocation>
        <location evidence="1">Membrane</location>
    </subcellularLocation>
    <text evidence="1">Associated to membranes via binding to ATP6AP2.</text>
</comment>
<comment type="similarity">
    <text evidence="6">Belongs to the peptidase A1 family.</text>
</comment>
<evidence type="ECO:0000250" key="1">
    <source>
        <dbReference type="UniProtKB" id="P00797"/>
    </source>
</evidence>
<evidence type="ECO:0000255" key="2"/>
<evidence type="ECO:0000255" key="3">
    <source>
        <dbReference type="PROSITE-ProRule" id="PRU01103"/>
    </source>
</evidence>
<evidence type="ECO:0000255" key="4">
    <source>
        <dbReference type="PROSITE-ProRule" id="PRU10094"/>
    </source>
</evidence>
<evidence type="ECO:0000303" key="5">
    <source>
    </source>
</evidence>
<evidence type="ECO:0000305" key="6"/>
<gene>
    <name type="primary">REN</name>
</gene>
<organism>
    <name type="scientific">Pan troglodytes</name>
    <name type="common">Chimpanzee</name>
    <dbReference type="NCBI Taxonomy" id="9598"/>
    <lineage>
        <taxon>Eukaryota</taxon>
        <taxon>Metazoa</taxon>
        <taxon>Chordata</taxon>
        <taxon>Craniata</taxon>
        <taxon>Vertebrata</taxon>
        <taxon>Euteleostomi</taxon>
        <taxon>Mammalia</taxon>
        <taxon>Eutheria</taxon>
        <taxon>Euarchontoglires</taxon>
        <taxon>Primates</taxon>
        <taxon>Haplorrhini</taxon>
        <taxon>Catarrhini</taxon>
        <taxon>Hominidae</taxon>
        <taxon>Pan</taxon>
    </lineage>
</organism>
<proteinExistence type="inferred from homology"/>